<protein>
    <recommendedName>
        <fullName evidence="2">Translation initiation factor IF-2</fullName>
    </recommendedName>
</protein>
<gene>
    <name evidence="2" type="primary">infB</name>
    <name type="ordered locus">stu0344</name>
</gene>
<reference key="1">
    <citation type="journal article" date="2004" name="Nat. Biotechnol.">
        <title>Complete sequence and comparative genome analysis of the dairy bacterium Streptococcus thermophilus.</title>
        <authorList>
            <person name="Bolotin A."/>
            <person name="Quinquis B."/>
            <person name="Renault P."/>
            <person name="Sorokin A."/>
            <person name="Ehrlich S.D."/>
            <person name="Kulakauskas S."/>
            <person name="Lapidus A."/>
            <person name="Goltsman E."/>
            <person name="Mazur M."/>
            <person name="Pusch G.D."/>
            <person name="Fonstein M."/>
            <person name="Overbeek R."/>
            <person name="Kyprides N."/>
            <person name="Purnelle B."/>
            <person name="Prozzi D."/>
            <person name="Ngui K."/>
            <person name="Masuy D."/>
            <person name="Hancy F."/>
            <person name="Burteau S."/>
            <person name="Boutry M."/>
            <person name="Delcour J."/>
            <person name="Goffeau A."/>
            <person name="Hols P."/>
        </authorList>
    </citation>
    <scope>NUCLEOTIDE SEQUENCE [LARGE SCALE GENOMIC DNA]</scope>
    <source>
        <strain>ATCC BAA-250 / LMG 18311</strain>
    </source>
</reference>
<name>IF2_STRT2</name>
<accession>Q5M5V5</accession>
<evidence type="ECO:0000250" key="1"/>
<evidence type="ECO:0000255" key="2">
    <source>
        <dbReference type="HAMAP-Rule" id="MF_00100"/>
    </source>
</evidence>
<evidence type="ECO:0000256" key="3">
    <source>
        <dbReference type="SAM" id="MobiDB-lite"/>
    </source>
</evidence>
<sequence>MSKKRLYEIAKEVGVESKVIVAKAQELGLSVKSHSSSVEEADANRITSSLKPGTAKDESKPAPKATPTPKEEKVEPKVDKASVAKSAPAKETSKAEVKEASVALKKPKSRNFKAEREARAKAEAERRKNGGGRDNRNRNQQGNDQGKRHNNDRRNQKGNGQGDHNKGNRDNSTNHDRNFQGKLRNDQNQNNRRDNARNNQAGPRIDLKARAAALKAEQNAEYSRQSETRFREEKAAEQRRAKEQEKARKEKQQVKVAVQKAAAETKPAPKPAPVAPQSAPTAQVQDTRRKKVRPNKSRDNRRVNEDGPKQTRNNKWNNQNQVRNQRNSNWNKNKNKKGKNNRGNSAPKPVTERKFHELPKEFEYTEGMTVAEIAKRIKREPAEIVKKLFMMGVMATQNQSLDGDTIELLMVDYGIEATKKEEVDNADIERFFVDEDYLNKDAMVERAPVVTIMGHVDHGKTTLLDTLRNSRVATGEAGGITQHIGAYQIEEGGKKITFLDTPGHAAFTSMRARGASVTDITVLIVAADDGVMPQTIEAINHSKAAGVPIIVAINKIDKPDANPERVIGELAEHGVISTAWGGDSEFVEISAKFGQNIEELLETILLVAEVEELKADPTVRAIGTVIEARLDKGKGAVATLLVQQGTLNVQDPIVVGNTFGRVRAMTNDLGRRIKTAGPSAPVSITGLNEAPMAGDHFAVYEDEKAARAAGEERAKRALMKQRQQTHRVSLDNLFDTLKAGEMKTVNVIIKADVQGSVEALAASLLKIDVEGVRVNVVHSAVGAINESDITLAEASDAVVIGFNVRPTPQARQQAETDEVEIRLHSIIYKVIEEIEDAMKGMLDPEFEEKIIGEAVIRETFKVSKVGTIGGFMVTNGKITRDSSARVIRDGVVIFDGKLASLKHYKDDVKEVGNAQEGGLTIENYNDIKVDDVIEAYIMEEIKR</sequence>
<dbReference type="EMBL" id="CP000023">
    <property type="protein sequence ID" value="AAV60064.1"/>
    <property type="molecule type" value="Genomic_DNA"/>
</dbReference>
<dbReference type="RefSeq" id="WP_011225498.1">
    <property type="nucleotide sequence ID" value="NC_006448.1"/>
</dbReference>
<dbReference type="SMR" id="Q5M5V5"/>
<dbReference type="STRING" id="264199.stu0344"/>
<dbReference type="KEGG" id="stl:stu0344"/>
<dbReference type="PATRIC" id="fig|264199.4.peg.350"/>
<dbReference type="eggNOG" id="COG0532">
    <property type="taxonomic scope" value="Bacteria"/>
</dbReference>
<dbReference type="HOGENOM" id="CLU_006301_5_0_9"/>
<dbReference type="Proteomes" id="UP000001170">
    <property type="component" value="Chromosome"/>
</dbReference>
<dbReference type="GO" id="GO:0005829">
    <property type="term" value="C:cytosol"/>
    <property type="evidence" value="ECO:0007669"/>
    <property type="project" value="TreeGrafter"/>
</dbReference>
<dbReference type="GO" id="GO:0005525">
    <property type="term" value="F:GTP binding"/>
    <property type="evidence" value="ECO:0007669"/>
    <property type="project" value="UniProtKB-KW"/>
</dbReference>
<dbReference type="GO" id="GO:0003924">
    <property type="term" value="F:GTPase activity"/>
    <property type="evidence" value="ECO:0007669"/>
    <property type="project" value="UniProtKB-UniRule"/>
</dbReference>
<dbReference type="GO" id="GO:0003743">
    <property type="term" value="F:translation initiation factor activity"/>
    <property type="evidence" value="ECO:0007669"/>
    <property type="project" value="UniProtKB-UniRule"/>
</dbReference>
<dbReference type="CDD" id="cd01887">
    <property type="entry name" value="IF2_eIF5B"/>
    <property type="match status" value="1"/>
</dbReference>
<dbReference type="CDD" id="cd03702">
    <property type="entry name" value="IF2_mtIF2_II"/>
    <property type="match status" value="1"/>
</dbReference>
<dbReference type="CDD" id="cd03692">
    <property type="entry name" value="mtIF2_IVc"/>
    <property type="match status" value="1"/>
</dbReference>
<dbReference type="FunFam" id="1.10.10.2480:FF:000003">
    <property type="entry name" value="Translation initiation factor IF-2"/>
    <property type="match status" value="1"/>
</dbReference>
<dbReference type="FunFam" id="2.40.30.10:FF:000007">
    <property type="entry name" value="Translation initiation factor IF-2"/>
    <property type="match status" value="1"/>
</dbReference>
<dbReference type="FunFam" id="2.40.30.10:FF:000008">
    <property type="entry name" value="Translation initiation factor IF-2"/>
    <property type="match status" value="1"/>
</dbReference>
<dbReference type="FunFam" id="3.40.50.10050:FF:000001">
    <property type="entry name" value="Translation initiation factor IF-2"/>
    <property type="match status" value="1"/>
</dbReference>
<dbReference type="FunFam" id="3.40.50.300:FF:000019">
    <property type="entry name" value="Translation initiation factor IF-2"/>
    <property type="match status" value="1"/>
</dbReference>
<dbReference type="Gene3D" id="1.10.10.2480">
    <property type="match status" value="1"/>
</dbReference>
<dbReference type="Gene3D" id="3.40.50.300">
    <property type="entry name" value="P-loop containing nucleotide triphosphate hydrolases"/>
    <property type="match status" value="1"/>
</dbReference>
<dbReference type="Gene3D" id="2.40.30.10">
    <property type="entry name" value="Translation factors"/>
    <property type="match status" value="2"/>
</dbReference>
<dbReference type="Gene3D" id="3.40.50.10050">
    <property type="entry name" value="Translation initiation factor IF- 2, domain 3"/>
    <property type="match status" value="1"/>
</dbReference>
<dbReference type="HAMAP" id="MF_00100_B">
    <property type="entry name" value="IF_2_B"/>
    <property type="match status" value="1"/>
</dbReference>
<dbReference type="InterPro" id="IPR053905">
    <property type="entry name" value="EF-G-like_DII"/>
</dbReference>
<dbReference type="InterPro" id="IPR044145">
    <property type="entry name" value="IF2_II"/>
</dbReference>
<dbReference type="InterPro" id="IPR006847">
    <property type="entry name" value="IF2_N"/>
</dbReference>
<dbReference type="InterPro" id="IPR027417">
    <property type="entry name" value="P-loop_NTPase"/>
</dbReference>
<dbReference type="InterPro" id="IPR005225">
    <property type="entry name" value="Small_GTP-bd"/>
</dbReference>
<dbReference type="InterPro" id="IPR000795">
    <property type="entry name" value="T_Tr_GTP-bd_dom"/>
</dbReference>
<dbReference type="InterPro" id="IPR000178">
    <property type="entry name" value="TF_IF2_bacterial-like"/>
</dbReference>
<dbReference type="InterPro" id="IPR015760">
    <property type="entry name" value="TIF_IF2"/>
</dbReference>
<dbReference type="InterPro" id="IPR023115">
    <property type="entry name" value="TIF_IF2_dom3"/>
</dbReference>
<dbReference type="InterPro" id="IPR036925">
    <property type="entry name" value="TIF_IF2_dom3_sf"/>
</dbReference>
<dbReference type="InterPro" id="IPR009000">
    <property type="entry name" value="Transl_B-barrel_sf"/>
</dbReference>
<dbReference type="NCBIfam" id="TIGR00487">
    <property type="entry name" value="IF-2"/>
    <property type="match status" value="1"/>
</dbReference>
<dbReference type="NCBIfam" id="TIGR00231">
    <property type="entry name" value="small_GTP"/>
    <property type="match status" value="1"/>
</dbReference>
<dbReference type="PANTHER" id="PTHR43381:SF5">
    <property type="entry name" value="TR-TYPE G DOMAIN-CONTAINING PROTEIN"/>
    <property type="match status" value="1"/>
</dbReference>
<dbReference type="PANTHER" id="PTHR43381">
    <property type="entry name" value="TRANSLATION INITIATION FACTOR IF-2-RELATED"/>
    <property type="match status" value="1"/>
</dbReference>
<dbReference type="Pfam" id="PF22042">
    <property type="entry name" value="EF-G_D2"/>
    <property type="match status" value="1"/>
</dbReference>
<dbReference type="Pfam" id="PF00009">
    <property type="entry name" value="GTP_EFTU"/>
    <property type="match status" value="1"/>
</dbReference>
<dbReference type="Pfam" id="PF11987">
    <property type="entry name" value="IF-2"/>
    <property type="match status" value="1"/>
</dbReference>
<dbReference type="Pfam" id="PF04760">
    <property type="entry name" value="IF2_N"/>
    <property type="match status" value="2"/>
</dbReference>
<dbReference type="PRINTS" id="PR00449">
    <property type="entry name" value="RASTRNSFRMNG"/>
</dbReference>
<dbReference type="SUPFAM" id="SSF52156">
    <property type="entry name" value="Initiation factor IF2/eIF5b, domain 3"/>
    <property type="match status" value="1"/>
</dbReference>
<dbReference type="SUPFAM" id="SSF52540">
    <property type="entry name" value="P-loop containing nucleoside triphosphate hydrolases"/>
    <property type="match status" value="1"/>
</dbReference>
<dbReference type="SUPFAM" id="SSF50447">
    <property type="entry name" value="Translation proteins"/>
    <property type="match status" value="2"/>
</dbReference>
<dbReference type="PROSITE" id="PS51722">
    <property type="entry name" value="G_TR_2"/>
    <property type="match status" value="1"/>
</dbReference>
<dbReference type="PROSITE" id="PS01176">
    <property type="entry name" value="IF2"/>
    <property type="match status" value="1"/>
</dbReference>
<proteinExistence type="inferred from homology"/>
<organism>
    <name type="scientific">Streptococcus thermophilus (strain ATCC BAA-250 / LMG 18311)</name>
    <dbReference type="NCBI Taxonomy" id="264199"/>
    <lineage>
        <taxon>Bacteria</taxon>
        <taxon>Bacillati</taxon>
        <taxon>Bacillota</taxon>
        <taxon>Bacilli</taxon>
        <taxon>Lactobacillales</taxon>
        <taxon>Streptococcaceae</taxon>
        <taxon>Streptococcus</taxon>
    </lineage>
</organism>
<comment type="function">
    <text evidence="2">One of the essential components for the initiation of protein synthesis. Protects formylmethionyl-tRNA from spontaneous hydrolysis and promotes its binding to the 30S ribosomal subunits. Also involved in the hydrolysis of GTP during the formation of the 70S ribosomal complex.</text>
</comment>
<comment type="subcellular location">
    <subcellularLocation>
        <location evidence="2">Cytoplasm</location>
    </subcellularLocation>
</comment>
<comment type="similarity">
    <text evidence="2">Belongs to the TRAFAC class translation factor GTPase superfamily. Classic translation factor GTPase family. IF-2 subfamily.</text>
</comment>
<feature type="chain" id="PRO_0000228250" description="Translation initiation factor IF-2">
    <location>
        <begin position="1"/>
        <end position="943"/>
    </location>
</feature>
<feature type="domain" description="tr-type G">
    <location>
        <begin position="445"/>
        <end position="614"/>
    </location>
</feature>
<feature type="region of interest" description="Disordered" evidence="3">
    <location>
        <begin position="30"/>
        <end position="357"/>
    </location>
</feature>
<feature type="region of interest" description="G1" evidence="1">
    <location>
        <begin position="454"/>
        <end position="461"/>
    </location>
</feature>
<feature type="region of interest" description="G2" evidence="1">
    <location>
        <begin position="479"/>
        <end position="483"/>
    </location>
</feature>
<feature type="region of interest" description="G3" evidence="1">
    <location>
        <begin position="500"/>
        <end position="503"/>
    </location>
</feature>
<feature type="region of interest" description="G4" evidence="1">
    <location>
        <begin position="554"/>
        <end position="557"/>
    </location>
</feature>
<feature type="region of interest" description="G5" evidence="1">
    <location>
        <begin position="590"/>
        <end position="592"/>
    </location>
</feature>
<feature type="compositionally biased region" description="Basic and acidic residues" evidence="3">
    <location>
        <begin position="69"/>
        <end position="82"/>
    </location>
</feature>
<feature type="compositionally biased region" description="Basic and acidic residues" evidence="3">
    <location>
        <begin position="112"/>
        <end position="137"/>
    </location>
</feature>
<feature type="compositionally biased region" description="Basic and acidic residues" evidence="3">
    <location>
        <begin position="145"/>
        <end position="155"/>
    </location>
</feature>
<feature type="compositionally biased region" description="Basic and acidic residues" evidence="3">
    <location>
        <begin position="163"/>
        <end position="196"/>
    </location>
</feature>
<feature type="compositionally biased region" description="Basic and acidic residues" evidence="3">
    <location>
        <begin position="224"/>
        <end position="253"/>
    </location>
</feature>
<feature type="compositionally biased region" description="Low complexity" evidence="3">
    <location>
        <begin position="254"/>
        <end position="266"/>
    </location>
</feature>
<feature type="compositionally biased region" description="Basic and acidic residues" evidence="3">
    <location>
        <begin position="296"/>
        <end position="309"/>
    </location>
</feature>
<feature type="compositionally biased region" description="Low complexity" evidence="3">
    <location>
        <begin position="313"/>
        <end position="332"/>
    </location>
</feature>
<feature type="binding site" evidence="2">
    <location>
        <begin position="454"/>
        <end position="461"/>
    </location>
    <ligand>
        <name>GTP</name>
        <dbReference type="ChEBI" id="CHEBI:37565"/>
    </ligand>
</feature>
<feature type="binding site" evidence="2">
    <location>
        <begin position="500"/>
        <end position="504"/>
    </location>
    <ligand>
        <name>GTP</name>
        <dbReference type="ChEBI" id="CHEBI:37565"/>
    </ligand>
</feature>
<feature type="binding site" evidence="2">
    <location>
        <begin position="554"/>
        <end position="557"/>
    </location>
    <ligand>
        <name>GTP</name>
        <dbReference type="ChEBI" id="CHEBI:37565"/>
    </ligand>
</feature>
<keyword id="KW-0963">Cytoplasm</keyword>
<keyword id="KW-0342">GTP-binding</keyword>
<keyword id="KW-0396">Initiation factor</keyword>
<keyword id="KW-0547">Nucleotide-binding</keyword>
<keyword id="KW-0648">Protein biosynthesis</keyword>
<keyword id="KW-1185">Reference proteome</keyword>